<name>T126A_RAT</name>
<keyword id="KW-0472">Membrane</keyword>
<keyword id="KW-0496">Mitochondrion</keyword>
<keyword id="KW-0999">Mitochondrion inner membrane</keyword>
<keyword id="KW-1185">Reference proteome</keyword>
<keyword id="KW-0812">Transmembrane</keyword>
<keyword id="KW-1133">Transmembrane helix</keyword>
<dbReference type="EMBL" id="BC089104">
    <property type="protein sequence ID" value="AAH89104.1"/>
    <property type="molecule type" value="mRNA"/>
</dbReference>
<dbReference type="RefSeq" id="NP_001011557.1">
    <property type="nucleotide sequence ID" value="NM_001011557.2"/>
</dbReference>
<dbReference type="RefSeq" id="XP_006229751.1">
    <property type="nucleotide sequence ID" value="XM_006229689.5"/>
</dbReference>
<dbReference type="FunCoup" id="Q5HZA9">
    <property type="interactions" value="1672"/>
</dbReference>
<dbReference type="STRING" id="10116.ENSRNOP00000032681"/>
<dbReference type="GlyGen" id="Q5HZA9">
    <property type="glycosylation" value="1 site, 1 O-linked glycan (1 site)"/>
</dbReference>
<dbReference type="iPTMnet" id="Q5HZA9"/>
<dbReference type="PhosphoSitePlus" id="Q5HZA9"/>
<dbReference type="SwissPalm" id="Q5HZA9"/>
<dbReference type="jPOST" id="Q5HZA9"/>
<dbReference type="PaxDb" id="10116-ENSRNOP00000032681"/>
<dbReference type="Ensembl" id="ENSRNOT00000038333.7">
    <property type="protein sequence ID" value="ENSRNOP00000032681.4"/>
    <property type="gene ID" value="ENSRNOG00000022748.7"/>
</dbReference>
<dbReference type="GeneID" id="293113"/>
<dbReference type="KEGG" id="rno:293113"/>
<dbReference type="AGR" id="RGD:1305677"/>
<dbReference type="CTD" id="84233"/>
<dbReference type="RGD" id="1305677">
    <property type="gene designation" value="Tmem126a"/>
</dbReference>
<dbReference type="eggNOG" id="ENOG502RYF0">
    <property type="taxonomic scope" value="Eukaryota"/>
</dbReference>
<dbReference type="GeneTree" id="ENSGT00520000055616"/>
<dbReference type="HOGENOM" id="CLU_105475_1_0_1"/>
<dbReference type="InParanoid" id="Q5HZA9"/>
<dbReference type="OrthoDB" id="29397at9989"/>
<dbReference type="PhylomeDB" id="Q5HZA9"/>
<dbReference type="TreeFam" id="TF327069"/>
<dbReference type="PRO" id="PR:Q5HZA9"/>
<dbReference type="Proteomes" id="UP000002494">
    <property type="component" value="Chromosome 1"/>
</dbReference>
<dbReference type="Bgee" id="ENSRNOG00000022748">
    <property type="expression patterns" value="Expressed in heart and 20 other cell types or tissues"/>
</dbReference>
<dbReference type="GO" id="GO:0005743">
    <property type="term" value="C:mitochondrial inner membrane"/>
    <property type="evidence" value="ECO:0000250"/>
    <property type="project" value="UniProtKB"/>
</dbReference>
<dbReference type="GO" id="GO:0005739">
    <property type="term" value="C:mitochondrion"/>
    <property type="evidence" value="ECO:0000250"/>
    <property type="project" value="UniProtKB"/>
</dbReference>
<dbReference type="GO" id="GO:0005886">
    <property type="term" value="C:plasma membrane"/>
    <property type="evidence" value="ECO:0000266"/>
    <property type="project" value="RGD"/>
</dbReference>
<dbReference type="GO" id="GO:0141164">
    <property type="term" value="P:mitochondrial protein quality control"/>
    <property type="evidence" value="ECO:0000250"/>
    <property type="project" value="UniProtKB"/>
</dbReference>
<dbReference type="GO" id="GO:0032981">
    <property type="term" value="P:mitochondrial respiratory chain complex I assembly"/>
    <property type="evidence" value="ECO:0000250"/>
    <property type="project" value="UniProtKB"/>
</dbReference>
<dbReference type="GO" id="GO:0021554">
    <property type="term" value="P:optic nerve development"/>
    <property type="evidence" value="ECO:0000266"/>
    <property type="project" value="RGD"/>
</dbReference>
<dbReference type="GO" id="GO:0032979">
    <property type="term" value="P:protein insertion into mitochondrial inner membrane from matrix"/>
    <property type="evidence" value="ECO:0000250"/>
    <property type="project" value="UniProtKB"/>
</dbReference>
<dbReference type="GO" id="GO:0034142">
    <property type="term" value="P:toll-like receptor 4 signaling pathway"/>
    <property type="evidence" value="ECO:0000266"/>
    <property type="project" value="RGD"/>
</dbReference>
<dbReference type="InterPro" id="IPR009801">
    <property type="entry name" value="TMEM126"/>
</dbReference>
<dbReference type="PANTHER" id="PTHR16296:SF4">
    <property type="entry name" value="TRANSMEMBRANE PROTEIN 126A"/>
    <property type="match status" value="1"/>
</dbReference>
<dbReference type="PANTHER" id="PTHR16296">
    <property type="entry name" value="UNCHARACTERIZED HYPOTHALAMUS PROTEIN HT007"/>
    <property type="match status" value="1"/>
</dbReference>
<dbReference type="Pfam" id="PF07114">
    <property type="entry name" value="TMEM126"/>
    <property type="match status" value="1"/>
</dbReference>
<feature type="chain" id="PRO_0000271002" description="Transmembrane protein 126A">
    <location>
        <begin position="1"/>
        <end position="196"/>
    </location>
</feature>
<feature type="topological domain" description="Mitochondrial matrix" evidence="2">
    <location>
        <begin position="1"/>
        <end position="34"/>
    </location>
</feature>
<feature type="transmembrane region" description="Helical" evidence="2">
    <location>
        <begin position="35"/>
        <end position="55"/>
    </location>
</feature>
<feature type="topological domain" description="Mitochondrial intermembrane" evidence="2">
    <location>
        <begin position="56"/>
        <end position="57"/>
    </location>
</feature>
<feature type="transmembrane region" description="Helical" evidence="2">
    <location>
        <begin position="58"/>
        <end position="78"/>
    </location>
</feature>
<feature type="topological domain" description="Mitochondrial matrix" evidence="2">
    <location>
        <begin position="79"/>
        <end position="106"/>
    </location>
</feature>
<feature type="transmembrane region" description="Helical" evidence="2">
    <location>
        <begin position="107"/>
        <end position="127"/>
    </location>
</feature>
<feature type="topological domain" description="Mitochondrial intermembrane" evidence="2">
    <location>
        <begin position="128"/>
        <end position="159"/>
    </location>
</feature>
<feature type="transmembrane region" description="Helical" evidence="2">
    <location>
        <begin position="160"/>
        <end position="176"/>
    </location>
</feature>
<feature type="topological domain" description="Mitochondrial matrix" evidence="2">
    <location>
        <begin position="177"/>
        <end position="196"/>
    </location>
</feature>
<comment type="function">
    <text evidence="1">Protein required for the cotranslational protein quality control in the inner membrane of the mitochondria. Associates with newly synthesized polypeptides and may act as a chaperone that cooperates with OXA1L for the insertion of newly synthesized mitochondrial proteins into the inner membrane. Required for the assembly of the ND4 module of mitochondrial complex I.</text>
</comment>
<comment type="subunit">
    <text evidence="1">Interacts with OXA1L; promoting cotranslational quality control in mitochondria.</text>
</comment>
<comment type="subcellular location">
    <subcellularLocation>
        <location evidence="1">Mitochondrion inner membrane</location>
        <topology evidence="1">Multi-pass membrane protein</topology>
    </subcellularLocation>
</comment>
<comment type="similarity">
    <text evidence="3">Belongs to the TMEM126 family.</text>
</comment>
<gene>
    <name type="primary">Tmem126a</name>
</gene>
<organism>
    <name type="scientific">Rattus norvegicus</name>
    <name type="common">Rat</name>
    <dbReference type="NCBI Taxonomy" id="10116"/>
    <lineage>
        <taxon>Eukaryota</taxon>
        <taxon>Metazoa</taxon>
        <taxon>Chordata</taxon>
        <taxon>Craniata</taxon>
        <taxon>Vertebrata</taxon>
        <taxon>Euteleostomi</taxon>
        <taxon>Mammalia</taxon>
        <taxon>Eutheria</taxon>
        <taxon>Euarchontoglires</taxon>
        <taxon>Glires</taxon>
        <taxon>Rodentia</taxon>
        <taxon>Myomorpha</taxon>
        <taxon>Muroidea</taxon>
        <taxon>Muridae</taxon>
        <taxon>Murinae</taxon>
        <taxon>Rattus</taxon>
    </lineage>
</organism>
<protein>
    <recommendedName>
        <fullName>Transmembrane protein 126A</fullName>
    </recommendedName>
</protein>
<accession>Q5HZA9</accession>
<reference key="1">
    <citation type="journal article" date="2004" name="Genome Res.">
        <title>The status, quality, and expansion of the NIH full-length cDNA project: the Mammalian Gene Collection (MGC).</title>
        <authorList>
            <consortium name="The MGC Project Team"/>
        </authorList>
    </citation>
    <scope>NUCLEOTIDE SEQUENCE [LARGE SCALE MRNA]</scope>
    <source>
        <tissue>Ovary</tissue>
    </source>
</reference>
<proteinExistence type="evidence at transcript level"/>
<sequence>MESHKPSTNKDDLIFNIIPRKIKQLPESDRNLLEYGSAYIGLNAAFGGLIANSLFRRILNVTQARVASSLPMAVIPFLTANLSYHSFVSLPLSTGNLNCEICTTTRGTLVGFVLGGLYPILLAIPVNGGLAARYESSPLPQRGNIFNYWITISKPVFRKMLFPTLLQTAFAAYLGSRQYKLLIKALQLPEPDLEIQ</sequence>
<evidence type="ECO:0000250" key="1">
    <source>
        <dbReference type="UniProtKB" id="Q9H061"/>
    </source>
</evidence>
<evidence type="ECO:0000255" key="2"/>
<evidence type="ECO:0000305" key="3"/>